<reference key="1">
    <citation type="journal article" date="2007" name="Proc. Natl. Acad. Sci. U.S.A.">
        <title>Genome and proteome of long-chain alkane degrading Geobacillus thermodenitrificans NG80-2 isolated from a deep-subsurface oil reservoir.</title>
        <authorList>
            <person name="Feng L."/>
            <person name="Wang W."/>
            <person name="Cheng J."/>
            <person name="Ren Y."/>
            <person name="Zhao G."/>
            <person name="Gao C."/>
            <person name="Tang Y."/>
            <person name="Liu X."/>
            <person name="Han W."/>
            <person name="Peng X."/>
            <person name="Liu R."/>
            <person name="Wang L."/>
        </authorList>
    </citation>
    <scope>NUCLEOTIDE SEQUENCE [LARGE SCALE GENOMIC DNA]</scope>
    <source>
        <strain>NG80-2</strain>
    </source>
</reference>
<sequence>MAKVKVAILGSGNIGTDLMIKLERSSHLELTAMIGIDPESDGLKKAKTKGYYVFDGGLKQFLSEASELADLVFDATSAKAHVRHAKALREAGKMVIDLTPAAVGPYVVPSVNLGDYLEESNLNLITCGGQATIPIVHAINRVAQVHYSEIVATIASKSAGPGTRANIDEFTQTTAHGLEAIGGAKKGKAIIILNPAEPPIIMRNAVYALVECEQMDEVAIARSVQETVAYIQSYVPGYRLRTEPLFEGNKVTVFVEVEGAGDYLPTYSGNLDIMTATAIKVAEEWVQHRVKAASV</sequence>
<keyword id="KW-0058">Aromatic hydrocarbons catabolism</keyword>
<keyword id="KW-0520">NAD</keyword>
<keyword id="KW-0560">Oxidoreductase</keyword>
<name>ACDH_GEOTN</name>
<accession>A4IT43</accession>
<gene>
    <name type="primary">nbaJ</name>
    <name type="ordered locus">GTNG_3152</name>
</gene>
<feature type="chain" id="PRO_0000387663" description="Acetaldehyde dehydrogenase">
    <location>
        <begin position="1"/>
        <end position="295"/>
    </location>
</feature>
<feature type="active site" description="Acyl-thioester intermediate" evidence="1">
    <location>
        <position position="127"/>
    </location>
</feature>
<feature type="binding site" evidence="1">
    <location>
        <begin position="11"/>
        <end position="14"/>
    </location>
    <ligand>
        <name>NAD(+)</name>
        <dbReference type="ChEBI" id="CHEBI:57540"/>
    </ligand>
</feature>
<feature type="binding site" evidence="1">
    <location>
        <begin position="158"/>
        <end position="166"/>
    </location>
    <ligand>
        <name>NAD(+)</name>
        <dbReference type="ChEBI" id="CHEBI:57540"/>
    </ligand>
</feature>
<feature type="binding site" evidence="1">
    <location>
        <position position="270"/>
    </location>
    <ligand>
        <name>NAD(+)</name>
        <dbReference type="ChEBI" id="CHEBI:57540"/>
    </ligand>
</feature>
<proteinExistence type="inferred from homology"/>
<organism>
    <name type="scientific">Geobacillus thermodenitrificans (strain NG80-2)</name>
    <dbReference type="NCBI Taxonomy" id="420246"/>
    <lineage>
        <taxon>Bacteria</taxon>
        <taxon>Bacillati</taxon>
        <taxon>Bacillota</taxon>
        <taxon>Bacilli</taxon>
        <taxon>Bacillales</taxon>
        <taxon>Anoxybacillaceae</taxon>
        <taxon>Geobacillus</taxon>
    </lineage>
</organism>
<dbReference type="EC" id="1.2.1.10" evidence="1"/>
<dbReference type="EMBL" id="CP000557">
    <property type="protein sequence ID" value="ABO68497.1"/>
    <property type="status" value="ALT_INIT"/>
    <property type="molecule type" value="Genomic_DNA"/>
</dbReference>
<dbReference type="RefSeq" id="WP_011888281.1">
    <property type="nucleotide sequence ID" value="NC_009328.1"/>
</dbReference>
<dbReference type="SMR" id="A4IT43"/>
<dbReference type="KEGG" id="gtn:GTNG_3152"/>
<dbReference type="eggNOG" id="COG4569">
    <property type="taxonomic scope" value="Bacteria"/>
</dbReference>
<dbReference type="HOGENOM" id="CLU_062208_0_0_9"/>
<dbReference type="Proteomes" id="UP000001578">
    <property type="component" value="Chromosome"/>
</dbReference>
<dbReference type="GO" id="GO:0008774">
    <property type="term" value="F:acetaldehyde dehydrogenase (acetylating) activity"/>
    <property type="evidence" value="ECO:0007669"/>
    <property type="project" value="UniProtKB-UniRule"/>
</dbReference>
<dbReference type="GO" id="GO:0051287">
    <property type="term" value="F:NAD binding"/>
    <property type="evidence" value="ECO:0007669"/>
    <property type="project" value="UniProtKB-UniRule"/>
</dbReference>
<dbReference type="GO" id="GO:0009056">
    <property type="term" value="P:catabolic process"/>
    <property type="evidence" value="ECO:0007669"/>
    <property type="project" value="UniProtKB-KW"/>
</dbReference>
<dbReference type="CDD" id="cd23933">
    <property type="entry name" value="ALDH_C"/>
    <property type="match status" value="1"/>
</dbReference>
<dbReference type="Gene3D" id="3.30.360.10">
    <property type="entry name" value="Dihydrodipicolinate Reductase, domain 2"/>
    <property type="match status" value="1"/>
</dbReference>
<dbReference type="Gene3D" id="3.40.50.720">
    <property type="entry name" value="NAD(P)-binding Rossmann-like Domain"/>
    <property type="match status" value="1"/>
</dbReference>
<dbReference type="HAMAP" id="MF_01657">
    <property type="entry name" value="Ac_ald_DH_ac"/>
    <property type="match status" value="1"/>
</dbReference>
<dbReference type="InterPro" id="IPR003361">
    <property type="entry name" value="Acetaldehyde_dehydrogenase"/>
</dbReference>
<dbReference type="InterPro" id="IPR015426">
    <property type="entry name" value="Acetylaldehyde_DH_C"/>
</dbReference>
<dbReference type="InterPro" id="IPR036291">
    <property type="entry name" value="NAD(P)-bd_dom_sf"/>
</dbReference>
<dbReference type="InterPro" id="IPR000534">
    <property type="entry name" value="Semialdehyde_DH_NAD-bd"/>
</dbReference>
<dbReference type="NCBIfam" id="TIGR03215">
    <property type="entry name" value="ac_ald_DH_ac"/>
    <property type="match status" value="1"/>
</dbReference>
<dbReference type="NCBIfam" id="NF006157">
    <property type="entry name" value="PRK08300.1"/>
    <property type="match status" value="1"/>
</dbReference>
<dbReference type="Pfam" id="PF09290">
    <property type="entry name" value="AcetDehyd-dimer"/>
    <property type="match status" value="1"/>
</dbReference>
<dbReference type="Pfam" id="PF01118">
    <property type="entry name" value="Semialdhyde_dh"/>
    <property type="match status" value="1"/>
</dbReference>
<dbReference type="PIRSF" id="PIRSF015689">
    <property type="entry name" value="Actaldh_dh_actl"/>
    <property type="match status" value="1"/>
</dbReference>
<dbReference type="SMART" id="SM00859">
    <property type="entry name" value="Semialdhyde_dh"/>
    <property type="match status" value="1"/>
</dbReference>
<dbReference type="SUPFAM" id="SSF55347">
    <property type="entry name" value="Glyceraldehyde-3-phosphate dehydrogenase-like, C-terminal domain"/>
    <property type="match status" value="1"/>
</dbReference>
<dbReference type="SUPFAM" id="SSF51735">
    <property type="entry name" value="NAD(P)-binding Rossmann-fold domains"/>
    <property type="match status" value="1"/>
</dbReference>
<protein>
    <recommendedName>
        <fullName evidence="1">Acetaldehyde dehydrogenase</fullName>
        <ecNumber evidence="1">1.2.1.10</ecNumber>
    </recommendedName>
    <alternativeName>
        <fullName evidence="1">Acetaldehyde dehydrogenase [acetylating]</fullName>
    </alternativeName>
</protein>
<comment type="catalytic activity">
    <reaction evidence="1">
        <text>acetaldehyde + NAD(+) + CoA = acetyl-CoA + NADH + H(+)</text>
        <dbReference type="Rhea" id="RHEA:23288"/>
        <dbReference type="ChEBI" id="CHEBI:15343"/>
        <dbReference type="ChEBI" id="CHEBI:15378"/>
        <dbReference type="ChEBI" id="CHEBI:57287"/>
        <dbReference type="ChEBI" id="CHEBI:57288"/>
        <dbReference type="ChEBI" id="CHEBI:57540"/>
        <dbReference type="ChEBI" id="CHEBI:57945"/>
        <dbReference type="EC" id="1.2.1.10"/>
    </reaction>
</comment>
<comment type="similarity">
    <text evidence="1">Belongs to the acetaldehyde dehydrogenase family.</text>
</comment>
<comment type="sequence caution" evidence="2">
    <conflict type="erroneous initiation">
        <sequence resource="EMBL-CDS" id="ABO68497"/>
    </conflict>
</comment>
<evidence type="ECO:0000255" key="1">
    <source>
        <dbReference type="HAMAP-Rule" id="MF_01657"/>
    </source>
</evidence>
<evidence type="ECO:0000305" key="2"/>